<feature type="chain" id="PRO_1000148077" description="Septation ring formation regulator EzrA">
    <location>
        <begin position="1"/>
        <end position="575"/>
    </location>
</feature>
<feature type="topological domain" description="Extracellular" evidence="1">
    <location>
        <begin position="1"/>
        <end position="8"/>
    </location>
</feature>
<feature type="transmembrane region" description="Helical" evidence="1">
    <location>
        <begin position="9"/>
        <end position="27"/>
    </location>
</feature>
<feature type="topological domain" description="Cytoplasmic" evidence="1">
    <location>
        <begin position="28"/>
        <end position="575"/>
    </location>
</feature>
<feature type="coiled-coil region" evidence="1">
    <location>
        <begin position="105"/>
        <end position="191"/>
    </location>
</feature>
<feature type="coiled-coil region" evidence="1">
    <location>
        <begin position="265"/>
        <end position="301"/>
    </location>
</feature>
<feature type="coiled-coil region" evidence="1">
    <location>
        <begin position="354"/>
        <end position="416"/>
    </location>
</feature>
<feature type="coiled-coil region" evidence="1">
    <location>
        <begin position="456"/>
        <end position="526"/>
    </location>
</feature>
<proteinExistence type="inferred from homology"/>
<accession>C1CS76</accession>
<keyword id="KW-0131">Cell cycle</keyword>
<keyword id="KW-0132">Cell division</keyword>
<keyword id="KW-1003">Cell membrane</keyword>
<keyword id="KW-0175">Coiled coil</keyword>
<keyword id="KW-0472">Membrane</keyword>
<keyword id="KW-0717">Septation</keyword>
<keyword id="KW-0812">Transmembrane</keyword>
<keyword id="KW-1133">Transmembrane helix</keyword>
<reference key="1">
    <citation type="journal article" date="2010" name="Genome Biol.">
        <title>Structure and dynamics of the pan-genome of Streptococcus pneumoniae and closely related species.</title>
        <authorList>
            <person name="Donati C."/>
            <person name="Hiller N.L."/>
            <person name="Tettelin H."/>
            <person name="Muzzi A."/>
            <person name="Croucher N.J."/>
            <person name="Angiuoli S.V."/>
            <person name="Oggioni M."/>
            <person name="Dunning Hotopp J.C."/>
            <person name="Hu F.Z."/>
            <person name="Riley D.R."/>
            <person name="Covacci A."/>
            <person name="Mitchell T.J."/>
            <person name="Bentley S.D."/>
            <person name="Kilian M."/>
            <person name="Ehrlich G.D."/>
            <person name="Rappuoli R."/>
            <person name="Moxon E.R."/>
            <person name="Masignani V."/>
        </authorList>
    </citation>
    <scope>NUCLEOTIDE SEQUENCE [LARGE SCALE GENOMIC DNA]</scope>
    <source>
        <strain>Taiwan19F-14</strain>
    </source>
</reference>
<sequence length="575" mass="66520">MSNGQLIYLMVAIAVILVLAYVVAIFLRKRNEGRLEALEERKEELYNLPVNDEVEAVKNMHLIGQSQVAFREWNQKWVDLSLNSFADIENNLFEAEGYNHSFRFLKASHQIDQIESQITLIEEDIAAIRNALADLEKQESKNSGRVLHALDLFEELQHRVAENSEQYGQALDEIEKQLENIQSEFSQFVTLNSSGDPVEAAVILDNTENHILALSHIVDRVPALVTTLSTELPDQLQDLEAGYRKLIDANYHFVETDIEARFHLLYEAFKKNQENIRQLELDNAEYENGQAQEEINALYDIFTREIAAQKVVENLLATLPTYLQHMKENNTLLGEDIARLNKTYLLPETAASHVRRIQTELESFEAAIVEVTSNQEEPTQAYSVLEENLEDLQTQLKDIEDEQISVSERLTQIEKDDINARQKANVYVNRLHTIKRYMEKRNLPGIPQTFLKLFFTASNNTEDLMVELEQKMINIESVTRVLEIATNDMEALETETYNIVQYATLTEQLLQYSNRYRSFDERIQEAFNEALDIFEKEFDYHASFDKISQALEVAEPGVTNRFVTSYEKTRETIRF</sequence>
<protein>
    <recommendedName>
        <fullName evidence="1">Septation ring formation regulator EzrA</fullName>
    </recommendedName>
</protein>
<gene>
    <name evidence="1" type="primary">ezrA</name>
    <name type="ordered locus">SPT_1392</name>
</gene>
<comment type="function">
    <text evidence="1">Negative regulator of FtsZ ring formation; modulates the frequency and position of FtsZ ring formation. Inhibits FtsZ ring formation at polar sites. Interacts either with FtsZ or with one of its binding partners to promote depolymerization.</text>
</comment>
<comment type="subcellular location">
    <subcellularLocation>
        <location evidence="1">Cell membrane</location>
        <topology evidence="1">Single-pass membrane protein</topology>
    </subcellularLocation>
    <text evidence="1">Colocalized with FtsZ to the nascent septal site.</text>
</comment>
<comment type="similarity">
    <text evidence="1">Belongs to the EzrA family.</text>
</comment>
<organism>
    <name type="scientific">Streptococcus pneumoniae (strain Taiwan19F-14)</name>
    <dbReference type="NCBI Taxonomy" id="487213"/>
    <lineage>
        <taxon>Bacteria</taxon>
        <taxon>Bacillati</taxon>
        <taxon>Bacillota</taxon>
        <taxon>Bacilli</taxon>
        <taxon>Lactobacillales</taxon>
        <taxon>Streptococcaceae</taxon>
        <taxon>Streptococcus</taxon>
    </lineage>
</organism>
<name>EZRA_STRZT</name>
<evidence type="ECO:0000255" key="1">
    <source>
        <dbReference type="HAMAP-Rule" id="MF_00728"/>
    </source>
</evidence>
<dbReference type="EMBL" id="CP000921">
    <property type="protein sequence ID" value="ACO23080.1"/>
    <property type="molecule type" value="Genomic_DNA"/>
</dbReference>
<dbReference type="RefSeq" id="WP_000064821.1">
    <property type="nucleotide sequence ID" value="NC_012469.1"/>
</dbReference>
<dbReference type="SMR" id="C1CS76"/>
<dbReference type="KEGG" id="snt:SPT_1392"/>
<dbReference type="HOGENOM" id="CLU_034079_2_0_9"/>
<dbReference type="GO" id="GO:0005886">
    <property type="term" value="C:plasma membrane"/>
    <property type="evidence" value="ECO:0007669"/>
    <property type="project" value="UniProtKB-SubCell"/>
</dbReference>
<dbReference type="GO" id="GO:0005940">
    <property type="term" value="C:septin ring"/>
    <property type="evidence" value="ECO:0007669"/>
    <property type="project" value="InterPro"/>
</dbReference>
<dbReference type="GO" id="GO:0000917">
    <property type="term" value="P:division septum assembly"/>
    <property type="evidence" value="ECO:0007669"/>
    <property type="project" value="UniProtKB-KW"/>
</dbReference>
<dbReference type="GO" id="GO:0000921">
    <property type="term" value="P:septin ring assembly"/>
    <property type="evidence" value="ECO:0007669"/>
    <property type="project" value="InterPro"/>
</dbReference>
<dbReference type="HAMAP" id="MF_00728">
    <property type="entry name" value="EzrA"/>
    <property type="match status" value="1"/>
</dbReference>
<dbReference type="InterPro" id="IPR010379">
    <property type="entry name" value="EzrA"/>
</dbReference>
<dbReference type="NCBIfam" id="NF003410">
    <property type="entry name" value="PRK04778.1-4"/>
    <property type="match status" value="1"/>
</dbReference>
<dbReference type="Pfam" id="PF06160">
    <property type="entry name" value="EzrA"/>
    <property type="match status" value="1"/>
</dbReference>